<reference key="1">
    <citation type="journal article" date="2005" name="Genome Res.">
        <title>Coping with cold: the genome of the versatile marine Antarctica bacterium Pseudoalteromonas haloplanktis TAC125.</title>
        <authorList>
            <person name="Medigue C."/>
            <person name="Krin E."/>
            <person name="Pascal G."/>
            <person name="Barbe V."/>
            <person name="Bernsel A."/>
            <person name="Bertin P.N."/>
            <person name="Cheung F."/>
            <person name="Cruveiller S."/>
            <person name="D'Amico S."/>
            <person name="Duilio A."/>
            <person name="Fang G."/>
            <person name="Feller G."/>
            <person name="Ho C."/>
            <person name="Mangenot S."/>
            <person name="Marino G."/>
            <person name="Nilsson J."/>
            <person name="Parrilli E."/>
            <person name="Rocha E.P.C."/>
            <person name="Rouy Z."/>
            <person name="Sekowska A."/>
            <person name="Tutino M.L."/>
            <person name="Vallenet D."/>
            <person name="von Heijne G."/>
            <person name="Danchin A."/>
        </authorList>
    </citation>
    <scope>NUCLEOTIDE SEQUENCE [LARGE SCALE GENOMIC DNA]</scope>
    <source>
        <strain>TAC 125</strain>
    </source>
</reference>
<gene>
    <name evidence="1" type="primary">tgt</name>
    <name type="ordered locus">PSHAa0319</name>
</gene>
<protein>
    <recommendedName>
        <fullName evidence="1">Queuine tRNA-ribosyltransferase</fullName>
        <ecNumber evidence="1">2.4.2.29</ecNumber>
    </recommendedName>
    <alternativeName>
        <fullName evidence="1">Guanine insertion enzyme</fullName>
    </alternativeName>
    <alternativeName>
        <fullName evidence="1">tRNA-guanine transglycosylase</fullName>
    </alternativeName>
</protein>
<organism>
    <name type="scientific">Pseudoalteromonas translucida (strain TAC 125)</name>
    <dbReference type="NCBI Taxonomy" id="326442"/>
    <lineage>
        <taxon>Bacteria</taxon>
        <taxon>Pseudomonadati</taxon>
        <taxon>Pseudomonadota</taxon>
        <taxon>Gammaproteobacteria</taxon>
        <taxon>Alteromonadales</taxon>
        <taxon>Pseudoalteromonadaceae</taxon>
        <taxon>Pseudoalteromonas</taxon>
    </lineage>
</organism>
<feature type="chain" id="PRO_1000016829" description="Queuine tRNA-ribosyltransferase">
    <location>
        <begin position="1"/>
        <end position="375"/>
    </location>
</feature>
<feature type="region of interest" description="RNA binding" evidence="1">
    <location>
        <begin position="243"/>
        <end position="249"/>
    </location>
</feature>
<feature type="region of interest" description="RNA binding; important for wobble base 34 recognition" evidence="1">
    <location>
        <begin position="267"/>
        <end position="271"/>
    </location>
</feature>
<feature type="active site" description="Proton acceptor" evidence="1">
    <location>
        <position position="89"/>
    </location>
</feature>
<feature type="active site" description="Nucleophile" evidence="1">
    <location>
        <position position="262"/>
    </location>
</feature>
<feature type="binding site" evidence="1">
    <location>
        <begin position="89"/>
        <end position="93"/>
    </location>
    <ligand>
        <name>substrate</name>
    </ligand>
</feature>
<feature type="binding site" evidence="1">
    <location>
        <position position="143"/>
    </location>
    <ligand>
        <name>substrate</name>
    </ligand>
</feature>
<feature type="binding site" evidence="1">
    <location>
        <position position="185"/>
    </location>
    <ligand>
        <name>substrate</name>
    </ligand>
</feature>
<feature type="binding site" evidence="1">
    <location>
        <position position="212"/>
    </location>
    <ligand>
        <name>substrate</name>
    </ligand>
</feature>
<feature type="binding site" evidence="1">
    <location>
        <position position="300"/>
    </location>
    <ligand>
        <name>Zn(2+)</name>
        <dbReference type="ChEBI" id="CHEBI:29105"/>
    </ligand>
</feature>
<feature type="binding site" evidence="1">
    <location>
        <position position="302"/>
    </location>
    <ligand>
        <name>Zn(2+)</name>
        <dbReference type="ChEBI" id="CHEBI:29105"/>
    </ligand>
</feature>
<feature type="binding site" evidence="1">
    <location>
        <position position="305"/>
    </location>
    <ligand>
        <name>Zn(2+)</name>
        <dbReference type="ChEBI" id="CHEBI:29105"/>
    </ligand>
</feature>
<feature type="binding site" evidence="1">
    <location>
        <position position="331"/>
    </location>
    <ligand>
        <name>Zn(2+)</name>
        <dbReference type="ChEBI" id="CHEBI:29105"/>
    </ligand>
</feature>
<evidence type="ECO:0000255" key="1">
    <source>
        <dbReference type="HAMAP-Rule" id="MF_00168"/>
    </source>
</evidence>
<sequence length="375" mass="41722">MKFELDTTDGKARRGRLIFDRGVIETPAFMPVGTYGTVKGMTPDEVKATGAQVCLGNTFHLMLRPGTEIIKQHGGLHKFMNWDFPILTDSGGFQVFSLGAMRKITEEGVLFSSPVNGEKIMMTPESSMQVQRDLGSDIVMIFDECTPYPATEKEAKDSMELSLRWAKRSKEGHGDNPSALFGIIQGGMYPELRAQSQAGLEEIGFDGYALGGLSVGEPKNEMINILDHCAYKMPADKPRYLMGVGKPEDLVESVRRGIDMFDCVMPTRNARNGHLFITTGVVKIRNAVHKTDTGPLDPECDCHTCGNYSRAYLHHLDKCNEILGARLNTIHNLRYYQRVMEGLRNAISAGKLDEFVQDFYARRGQDVPELADITN</sequence>
<proteinExistence type="inferred from homology"/>
<keyword id="KW-0328">Glycosyltransferase</keyword>
<keyword id="KW-0479">Metal-binding</keyword>
<keyword id="KW-0671">Queuosine biosynthesis</keyword>
<keyword id="KW-1185">Reference proteome</keyword>
<keyword id="KW-0808">Transferase</keyword>
<keyword id="KW-0819">tRNA processing</keyword>
<keyword id="KW-0862">Zinc</keyword>
<comment type="function">
    <text evidence="1">Catalyzes the base-exchange of a guanine (G) residue with the queuine precursor 7-aminomethyl-7-deazaguanine (PreQ1) at position 34 (anticodon wobble position) in tRNAs with GU(N) anticodons (tRNA-Asp, -Asn, -His and -Tyr). Catalysis occurs through a double-displacement mechanism. The nucleophile active site attacks the C1' of nucleotide 34 to detach the guanine base from the RNA, forming a covalent enzyme-RNA intermediate. The proton acceptor active site deprotonates the incoming PreQ1, allowing a nucleophilic attack on the C1' of the ribose to form the product. After dissociation, two additional enzymatic reactions on the tRNA convert PreQ1 to queuine (Q), resulting in the hypermodified nucleoside queuosine (7-(((4,5-cis-dihydroxy-2-cyclopenten-1-yl)amino)methyl)-7-deazaguanosine).</text>
</comment>
<comment type="catalytic activity">
    <reaction evidence="1">
        <text>7-aminomethyl-7-carbaguanine + guanosine(34) in tRNA = 7-aminomethyl-7-carbaguanosine(34) in tRNA + guanine</text>
        <dbReference type="Rhea" id="RHEA:24104"/>
        <dbReference type="Rhea" id="RHEA-COMP:10341"/>
        <dbReference type="Rhea" id="RHEA-COMP:10342"/>
        <dbReference type="ChEBI" id="CHEBI:16235"/>
        <dbReference type="ChEBI" id="CHEBI:58703"/>
        <dbReference type="ChEBI" id="CHEBI:74269"/>
        <dbReference type="ChEBI" id="CHEBI:82833"/>
        <dbReference type="EC" id="2.4.2.29"/>
    </reaction>
</comment>
<comment type="cofactor">
    <cofactor evidence="1">
        <name>Zn(2+)</name>
        <dbReference type="ChEBI" id="CHEBI:29105"/>
    </cofactor>
    <text evidence="1">Binds 1 zinc ion per subunit.</text>
</comment>
<comment type="pathway">
    <text evidence="1">tRNA modification; tRNA-queuosine biosynthesis.</text>
</comment>
<comment type="subunit">
    <text evidence="1">Homodimer. Within each dimer, one monomer is responsible for RNA recognition and catalysis, while the other monomer binds to the replacement base PreQ1.</text>
</comment>
<comment type="similarity">
    <text evidence="1">Belongs to the queuine tRNA-ribosyltransferase family.</text>
</comment>
<name>TGT_PSET1</name>
<accession>Q3ILB8</accession>
<dbReference type="EC" id="2.4.2.29" evidence="1"/>
<dbReference type="EMBL" id="CR954246">
    <property type="protein sequence ID" value="CAI85418.1"/>
    <property type="molecule type" value="Genomic_DNA"/>
</dbReference>
<dbReference type="SMR" id="Q3ILB8"/>
<dbReference type="STRING" id="326442.PSHAa0319"/>
<dbReference type="KEGG" id="pha:PSHAa0319"/>
<dbReference type="eggNOG" id="COG0343">
    <property type="taxonomic scope" value="Bacteria"/>
</dbReference>
<dbReference type="HOGENOM" id="CLU_022060_0_1_6"/>
<dbReference type="BioCyc" id="PHAL326442:PSHA_RS01580-MONOMER"/>
<dbReference type="UniPathway" id="UPA00392"/>
<dbReference type="Proteomes" id="UP000006843">
    <property type="component" value="Chromosome I"/>
</dbReference>
<dbReference type="GO" id="GO:0005829">
    <property type="term" value="C:cytosol"/>
    <property type="evidence" value="ECO:0007669"/>
    <property type="project" value="TreeGrafter"/>
</dbReference>
<dbReference type="GO" id="GO:0046872">
    <property type="term" value="F:metal ion binding"/>
    <property type="evidence" value="ECO:0007669"/>
    <property type="project" value="UniProtKB-KW"/>
</dbReference>
<dbReference type="GO" id="GO:0008479">
    <property type="term" value="F:tRNA-guanosine(34) queuine transglycosylase activity"/>
    <property type="evidence" value="ECO:0007669"/>
    <property type="project" value="UniProtKB-UniRule"/>
</dbReference>
<dbReference type="GO" id="GO:0008616">
    <property type="term" value="P:queuosine biosynthetic process"/>
    <property type="evidence" value="ECO:0007669"/>
    <property type="project" value="UniProtKB-UniRule"/>
</dbReference>
<dbReference type="GO" id="GO:0002099">
    <property type="term" value="P:tRNA wobble guanine modification"/>
    <property type="evidence" value="ECO:0007669"/>
    <property type="project" value="TreeGrafter"/>
</dbReference>
<dbReference type="GO" id="GO:0101030">
    <property type="term" value="P:tRNA-guanine transglycosylation"/>
    <property type="evidence" value="ECO:0007669"/>
    <property type="project" value="InterPro"/>
</dbReference>
<dbReference type="FunFam" id="3.20.20.105:FF:000001">
    <property type="entry name" value="Queuine tRNA-ribosyltransferase"/>
    <property type="match status" value="1"/>
</dbReference>
<dbReference type="Gene3D" id="3.20.20.105">
    <property type="entry name" value="Queuine tRNA-ribosyltransferase-like"/>
    <property type="match status" value="1"/>
</dbReference>
<dbReference type="HAMAP" id="MF_00168">
    <property type="entry name" value="Q_tRNA_Tgt"/>
    <property type="match status" value="1"/>
</dbReference>
<dbReference type="InterPro" id="IPR050076">
    <property type="entry name" value="ArchSynthase1/Queuine_TRR"/>
</dbReference>
<dbReference type="InterPro" id="IPR004803">
    <property type="entry name" value="TGT"/>
</dbReference>
<dbReference type="InterPro" id="IPR036511">
    <property type="entry name" value="TGT-like_sf"/>
</dbReference>
<dbReference type="InterPro" id="IPR002616">
    <property type="entry name" value="tRNA_ribo_trans-like"/>
</dbReference>
<dbReference type="NCBIfam" id="TIGR00430">
    <property type="entry name" value="Q_tRNA_tgt"/>
    <property type="match status" value="1"/>
</dbReference>
<dbReference type="NCBIfam" id="TIGR00449">
    <property type="entry name" value="tgt_general"/>
    <property type="match status" value="1"/>
</dbReference>
<dbReference type="PANTHER" id="PTHR46499">
    <property type="entry name" value="QUEUINE TRNA-RIBOSYLTRANSFERASE"/>
    <property type="match status" value="1"/>
</dbReference>
<dbReference type="PANTHER" id="PTHR46499:SF1">
    <property type="entry name" value="QUEUINE TRNA-RIBOSYLTRANSFERASE"/>
    <property type="match status" value="1"/>
</dbReference>
<dbReference type="Pfam" id="PF01702">
    <property type="entry name" value="TGT"/>
    <property type="match status" value="1"/>
</dbReference>
<dbReference type="SUPFAM" id="SSF51713">
    <property type="entry name" value="tRNA-guanine transglycosylase"/>
    <property type="match status" value="1"/>
</dbReference>